<reference key="1">
    <citation type="journal article" date="2008" name="Nat. Biotechnol.">
        <title>Genome sequencing and analysis of the biomass-degrading fungus Trichoderma reesei (syn. Hypocrea jecorina).</title>
        <authorList>
            <person name="Martinez D."/>
            <person name="Berka R.M."/>
            <person name="Henrissat B."/>
            <person name="Saloheimo M."/>
            <person name="Arvas M."/>
            <person name="Baker S.E."/>
            <person name="Chapman J."/>
            <person name="Chertkov O."/>
            <person name="Coutinho P.M."/>
            <person name="Cullen D."/>
            <person name="Danchin E.G."/>
            <person name="Grigoriev I.V."/>
            <person name="Harris P."/>
            <person name="Jackson M."/>
            <person name="Kubicek C.P."/>
            <person name="Han C.S."/>
            <person name="Ho I."/>
            <person name="Larrondo L.F."/>
            <person name="de Leon A.L."/>
            <person name="Magnuson J.K."/>
            <person name="Merino S."/>
            <person name="Misra M."/>
            <person name="Nelson B."/>
            <person name="Putnam N."/>
            <person name="Robbertse B."/>
            <person name="Salamov A.A."/>
            <person name="Schmoll M."/>
            <person name="Terry A."/>
            <person name="Thayer N."/>
            <person name="Westerholm-Parvinen A."/>
            <person name="Schoch C.L."/>
            <person name="Yao J."/>
            <person name="Barabote R."/>
            <person name="Nelson M.A."/>
            <person name="Detter C."/>
            <person name="Bruce D."/>
            <person name="Kuske C.R."/>
            <person name="Xie G."/>
            <person name="Richardson P."/>
            <person name="Rokhsar D.S."/>
            <person name="Lucas S.M."/>
            <person name="Rubin E.M."/>
            <person name="Dunn-Coleman N."/>
            <person name="Ward M."/>
            <person name="Brettin T.S."/>
        </authorList>
    </citation>
    <scope>NUCLEOTIDE SEQUENCE [LARGE SCALE GENOMIC DNA]</scope>
    <source>
        <strain>QM6a</strain>
    </source>
</reference>
<reference key="2">
    <citation type="journal article" date="2020" name="Nat. Chem. Biol.">
        <title>A fungal family of lytic polysaccharide monooxygenase-like copper proteins.</title>
        <authorList>
            <person name="Labourel A."/>
            <person name="Frandsen K.E.H."/>
            <person name="Zhang F."/>
            <person name="Brouilly N."/>
            <person name="Grisel S."/>
            <person name="Haon M."/>
            <person name="Ciano L."/>
            <person name="Ropartz D."/>
            <person name="Fanuel M."/>
            <person name="Martin F."/>
            <person name="Navarro D."/>
            <person name="Rosso M.N."/>
            <person name="Tandrup T."/>
            <person name="Bissaro B."/>
            <person name="Johansen K.S."/>
            <person name="Zerva A."/>
            <person name="Walton P.H."/>
            <person name="Henrissat B."/>
            <person name="Leggio L.L."/>
            <person name="Berrin J.G."/>
        </authorList>
    </citation>
    <scope>IDENTIFICATION</scope>
    <scope>FUNCTION</scope>
</reference>
<protein>
    <recommendedName>
        <fullName evidence="6">Lytic polysaccharide monooxygenase-like protein X325</fullName>
        <shortName evidence="6">LPMO-like protein X325</shortName>
    </recommendedName>
    <alternativeName>
        <fullName evidence="6">X325 family protein</fullName>
    </alternativeName>
</protein>
<proteinExistence type="inferred from homology"/>
<gene>
    <name evidence="6" type="primary">X325</name>
    <name type="ORF">TRIREDRAFT_21982</name>
</gene>
<feature type="signal peptide" evidence="4">
    <location>
        <begin position="1"/>
        <end position="17"/>
    </location>
</feature>
<feature type="chain" id="PRO_5004246641" description="Lytic polysaccharide monooxygenase-like protein X325">
    <location>
        <begin position="18"/>
        <end position="202"/>
    </location>
</feature>
<feature type="propeptide" id="PRO_0000459759" description="Removed in mature form" evidence="4">
    <location>
        <begin position="203"/>
        <end position="231"/>
    </location>
</feature>
<feature type="binding site" evidence="1">
    <location>
        <position position="18"/>
    </location>
    <ligand>
        <name>Cu(2+)</name>
        <dbReference type="ChEBI" id="CHEBI:29036"/>
    </ligand>
</feature>
<feature type="lipid moiety-binding region" description="GPI-anchor amidated isoleucine" evidence="4">
    <location>
        <position position="202"/>
    </location>
</feature>
<feature type="glycosylation site" description="N-linked (GlcNAc...) asparagine" evidence="5">
    <location>
        <position position="34"/>
    </location>
</feature>
<feature type="glycosylation site" description="N-linked (GlcNAc...) asparagine" evidence="5">
    <location>
        <position position="55"/>
    </location>
</feature>
<feature type="glycosylation site" description="N-linked (GlcNAc...) asparagine" evidence="5">
    <location>
        <position position="98"/>
    </location>
</feature>
<feature type="glycosylation site" description="N-linked (GlcNAc...) asparagine" evidence="5">
    <location>
        <position position="133"/>
    </location>
</feature>
<feature type="glycosylation site" description="N-linked (GlcNAc...) asparagine" evidence="5">
    <location>
        <position position="174"/>
    </location>
</feature>
<feature type="glycosylation site" description="N-linked (GlcNAc...) asparagine" evidence="5">
    <location>
        <position position="180"/>
    </location>
</feature>
<feature type="disulfide bond" evidence="1">
    <location>
        <begin position="47"/>
        <end position="157"/>
    </location>
</feature>
<feature type="disulfide bond" evidence="1">
    <location>
        <begin position="122"/>
        <end position="178"/>
    </location>
</feature>
<keyword id="KW-1003">Cell membrane</keyword>
<keyword id="KW-0186">Copper</keyword>
<keyword id="KW-1015">Disulfide bond</keyword>
<keyword id="KW-0325">Glycoprotein</keyword>
<keyword id="KW-0336">GPI-anchor</keyword>
<keyword id="KW-0449">Lipoprotein</keyword>
<keyword id="KW-0472">Membrane</keyword>
<keyword id="KW-0479">Metal-binding</keyword>
<keyword id="KW-1185">Reference proteome</keyword>
<keyword id="KW-0732">Signal</keyword>
<name>X325_HYPJQ</name>
<evidence type="ECO:0000250" key="1">
    <source>
        <dbReference type="UniProtKB" id="A0A4P9I8G4"/>
    </source>
</evidence>
<evidence type="ECO:0000250" key="2">
    <source>
        <dbReference type="UniProtKB" id="J9VHN6"/>
    </source>
</evidence>
<evidence type="ECO:0000250" key="3">
    <source>
        <dbReference type="UniProtKB" id="V5IRP6"/>
    </source>
</evidence>
<evidence type="ECO:0000255" key="4"/>
<evidence type="ECO:0000255" key="5">
    <source>
        <dbReference type="PROSITE-ProRule" id="PRU00498"/>
    </source>
</evidence>
<evidence type="ECO:0000303" key="6">
    <source>
    </source>
</evidence>
<evidence type="ECO:0000305" key="7"/>
<evidence type="ECO:0000305" key="8">
    <source>
    </source>
</evidence>
<organism>
    <name type="scientific">Hypocrea jecorina (strain QM6a)</name>
    <name type="common">Trichoderma reesei</name>
    <dbReference type="NCBI Taxonomy" id="431241"/>
    <lineage>
        <taxon>Eukaryota</taxon>
        <taxon>Fungi</taxon>
        <taxon>Dikarya</taxon>
        <taxon>Ascomycota</taxon>
        <taxon>Pezizomycotina</taxon>
        <taxon>Sordariomycetes</taxon>
        <taxon>Hypocreomycetidae</taxon>
        <taxon>Hypocreales</taxon>
        <taxon>Hypocreaceae</taxon>
        <taxon>Trichoderma</taxon>
    </lineage>
</organism>
<accession>G0RFK8</accession>
<comment type="function">
    <text evidence="2 3 8">Lytic polysaccharide monooxygenase-like protein that has diverged to biological functions other than polysaccharide degradation since it does not perform oxidative cleavage of polysaccharides (Probable). Acts as a cell surface-bound protein that functions in the copper-accumulation pathway (By similarity). May also act as the major cell wall sensor that regulates MAP kinase-dependent hyphal anastomosis, the fusion of hyphal cells (By similarity).</text>
</comment>
<comment type="cofactor">
    <cofactor evidence="1">
        <name>Cu(2+)</name>
        <dbReference type="ChEBI" id="CHEBI:29036"/>
    </cofactor>
    <text evidence="1">Binds 1 copper ion per subunit.</text>
</comment>
<comment type="subcellular location">
    <subcellularLocation>
        <location evidence="4">Cell membrane</location>
        <topology evidence="4">Lipid-anchor</topology>
        <topology evidence="4">GPI-anchor</topology>
    </subcellularLocation>
    <text evidence="8">Proteins attached to a GPI anchor via their C terminus are found in the outer leaflet of the lipid bilayer facing the extracellular environment. GPI anchors can also be considered as predetermined breaking points, which allow the release of proteins into the extracellular environment upon enzymatic cleavage.</text>
</comment>
<comment type="similarity">
    <text evidence="7">Belongs to the X325 family.</text>
</comment>
<sequence length="231" mass="24979">MRLSLLVTLALTALIEAHTVMVYPGWRGNNLITNETFPYGMQWMYPCGGMGTSRNRTYWPTTGGAVSFQPGWFRGHLQAQLQINLGYGTDGPDGGPPNMSNIMVKPFMLLGPTNNPYPGTVCLPQVPLPAGANVSAGDRATIQVVEQAQHGASLYSCVDIIFAEPGDPRIPIVNETNCFNSTQFGFAQIYTVTTQEPSLDVIASTTTGSAPRYYSWAGWLPLVAGAIWMAL</sequence>
<dbReference type="EMBL" id="GL985061">
    <property type="protein sequence ID" value="EGR49923.1"/>
    <property type="molecule type" value="Genomic_DNA"/>
</dbReference>
<dbReference type="RefSeq" id="XP_006964026.1">
    <property type="nucleotide sequence ID" value="XM_006963964.1"/>
</dbReference>
<dbReference type="SMR" id="G0RFK8"/>
<dbReference type="EnsemblFungi" id="EGR49923">
    <property type="protein sequence ID" value="EGR49923"/>
    <property type="gene ID" value="TRIREDRAFT_21982"/>
</dbReference>
<dbReference type="GeneID" id="18484064"/>
<dbReference type="KEGG" id="tre:TRIREDRAFT_21982"/>
<dbReference type="VEuPathDB" id="FungiDB:TRIREDRAFT_21982"/>
<dbReference type="eggNOG" id="ENOG502SIF7">
    <property type="taxonomic scope" value="Eukaryota"/>
</dbReference>
<dbReference type="HOGENOM" id="CLU_070647_1_1_1"/>
<dbReference type="OrthoDB" id="5329488at2759"/>
<dbReference type="Proteomes" id="UP000008984">
    <property type="component" value="Unassembled WGS sequence"/>
</dbReference>
<dbReference type="GO" id="GO:0005886">
    <property type="term" value="C:plasma membrane"/>
    <property type="evidence" value="ECO:0007669"/>
    <property type="project" value="UniProtKB-SubCell"/>
</dbReference>
<dbReference type="GO" id="GO:0098552">
    <property type="term" value="C:side of membrane"/>
    <property type="evidence" value="ECO:0007669"/>
    <property type="project" value="UniProtKB-KW"/>
</dbReference>
<dbReference type="GO" id="GO:0046872">
    <property type="term" value="F:metal ion binding"/>
    <property type="evidence" value="ECO:0007669"/>
    <property type="project" value="UniProtKB-KW"/>
</dbReference>
<dbReference type="CDD" id="cd21176">
    <property type="entry name" value="LPMO_auxiliary-like"/>
    <property type="match status" value="1"/>
</dbReference>
<dbReference type="InterPro" id="IPR046936">
    <property type="entry name" value="BIM1-like"/>
</dbReference>
<dbReference type="InterPro" id="IPR046530">
    <property type="entry name" value="BIM1-like_dom"/>
</dbReference>
<dbReference type="PANTHER" id="PTHR34992:SF10">
    <property type="entry name" value="COPPER ACQUISITION FACTOR BIM1-LIKE DOMAIN-CONTAINING PROTEIN"/>
    <property type="match status" value="1"/>
</dbReference>
<dbReference type="PANTHER" id="PTHR34992">
    <property type="entry name" value="HYPHAL ANASTAMOSIS-7 PROTEIN"/>
    <property type="match status" value="1"/>
</dbReference>
<dbReference type="Pfam" id="PF20238">
    <property type="entry name" value="BIM1-like_dom"/>
    <property type="match status" value="1"/>
</dbReference>